<feature type="chain" id="PRO_1000140754" description="Small ribosomal subunit protein uS4">
    <location>
        <begin position="1"/>
        <end position="203"/>
    </location>
</feature>
<feature type="domain" description="S4 RNA-binding" evidence="1">
    <location>
        <begin position="93"/>
        <end position="153"/>
    </location>
</feature>
<evidence type="ECO:0000255" key="1">
    <source>
        <dbReference type="HAMAP-Rule" id="MF_01306"/>
    </source>
</evidence>
<evidence type="ECO:0000305" key="2"/>
<gene>
    <name evidence="1" type="primary">rpsD</name>
    <name type="ordered locus">LCK_00217</name>
</gene>
<comment type="function">
    <text evidence="1">One of the primary rRNA binding proteins, it binds directly to 16S rRNA where it nucleates assembly of the body of the 30S subunit.</text>
</comment>
<comment type="function">
    <text evidence="1">With S5 and S12 plays an important role in translational accuracy.</text>
</comment>
<comment type="subunit">
    <text evidence="1">Part of the 30S ribosomal subunit. Contacts protein S5. The interaction surface between S4 and S5 is involved in control of translational fidelity.</text>
</comment>
<comment type="similarity">
    <text evidence="1">Belongs to the universal ribosomal protein uS4 family.</text>
</comment>
<sequence>MSRYTGPKWRISRRLGVSLSGTGKELSRRAYAPGDHGAGRRAKISEYGMQLREKQKLRFTYGLTERQFHALFNKAGKIRKGTHGTNFMILLEQRLDSLVYRLGFATTRQQARQLVNHGHIMVDGKRVDIPSYNVTPGQVVSVRDKSKNIVPIQAAVESVVARPQFVSFDAEKLEGSLVRLPEREELDADLNEALIVEYYNRLG</sequence>
<accession>B1MWZ8</accession>
<proteinExistence type="inferred from homology"/>
<organism>
    <name type="scientific">Leuconostoc citreum (strain KM20)</name>
    <dbReference type="NCBI Taxonomy" id="349519"/>
    <lineage>
        <taxon>Bacteria</taxon>
        <taxon>Bacillati</taxon>
        <taxon>Bacillota</taxon>
        <taxon>Bacilli</taxon>
        <taxon>Lactobacillales</taxon>
        <taxon>Lactobacillaceae</taxon>
        <taxon>Leuconostoc</taxon>
    </lineage>
</organism>
<keyword id="KW-1185">Reference proteome</keyword>
<keyword id="KW-0687">Ribonucleoprotein</keyword>
<keyword id="KW-0689">Ribosomal protein</keyword>
<keyword id="KW-0694">RNA-binding</keyword>
<keyword id="KW-0699">rRNA-binding</keyword>
<protein>
    <recommendedName>
        <fullName evidence="1">Small ribosomal subunit protein uS4</fullName>
    </recommendedName>
    <alternativeName>
        <fullName evidence="2">30S ribosomal protein S4</fullName>
    </alternativeName>
</protein>
<dbReference type="EMBL" id="DQ489736">
    <property type="protein sequence ID" value="ACA82050.1"/>
    <property type="molecule type" value="Genomic_DNA"/>
</dbReference>
<dbReference type="RefSeq" id="WP_004903771.1">
    <property type="nucleotide sequence ID" value="NC_010471.1"/>
</dbReference>
<dbReference type="SMR" id="B1MWZ8"/>
<dbReference type="STRING" id="349519.LCK_00217"/>
<dbReference type="GeneID" id="61102869"/>
<dbReference type="KEGG" id="lci:LCK_00217"/>
<dbReference type="eggNOG" id="COG0522">
    <property type="taxonomic scope" value="Bacteria"/>
</dbReference>
<dbReference type="HOGENOM" id="CLU_092403_0_1_9"/>
<dbReference type="OrthoDB" id="9803672at2"/>
<dbReference type="Proteomes" id="UP000002166">
    <property type="component" value="Chromosome"/>
</dbReference>
<dbReference type="GO" id="GO:0015935">
    <property type="term" value="C:small ribosomal subunit"/>
    <property type="evidence" value="ECO:0007669"/>
    <property type="project" value="InterPro"/>
</dbReference>
<dbReference type="GO" id="GO:0019843">
    <property type="term" value="F:rRNA binding"/>
    <property type="evidence" value="ECO:0007669"/>
    <property type="project" value="UniProtKB-UniRule"/>
</dbReference>
<dbReference type="GO" id="GO:0003735">
    <property type="term" value="F:structural constituent of ribosome"/>
    <property type="evidence" value="ECO:0007669"/>
    <property type="project" value="InterPro"/>
</dbReference>
<dbReference type="GO" id="GO:0042274">
    <property type="term" value="P:ribosomal small subunit biogenesis"/>
    <property type="evidence" value="ECO:0007669"/>
    <property type="project" value="TreeGrafter"/>
</dbReference>
<dbReference type="GO" id="GO:0006412">
    <property type="term" value="P:translation"/>
    <property type="evidence" value="ECO:0007669"/>
    <property type="project" value="UniProtKB-UniRule"/>
</dbReference>
<dbReference type="CDD" id="cd00165">
    <property type="entry name" value="S4"/>
    <property type="match status" value="1"/>
</dbReference>
<dbReference type="FunFam" id="3.10.290.10:FF:000001">
    <property type="entry name" value="30S ribosomal protein S4"/>
    <property type="match status" value="1"/>
</dbReference>
<dbReference type="Gene3D" id="1.10.1050.10">
    <property type="entry name" value="Ribosomal Protein S4 Delta 41, Chain A, domain 1"/>
    <property type="match status" value="1"/>
</dbReference>
<dbReference type="Gene3D" id="3.10.290.10">
    <property type="entry name" value="RNA-binding S4 domain"/>
    <property type="match status" value="1"/>
</dbReference>
<dbReference type="HAMAP" id="MF_01306_B">
    <property type="entry name" value="Ribosomal_uS4_B"/>
    <property type="match status" value="1"/>
</dbReference>
<dbReference type="InterPro" id="IPR022801">
    <property type="entry name" value="Ribosomal_uS4"/>
</dbReference>
<dbReference type="InterPro" id="IPR005709">
    <property type="entry name" value="Ribosomal_uS4_bac-type"/>
</dbReference>
<dbReference type="InterPro" id="IPR018079">
    <property type="entry name" value="Ribosomal_uS4_CS"/>
</dbReference>
<dbReference type="InterPro" id="IPR001912">
    <property type="entry name" value="Ribosomal_uS4_N"/>
</dbReference>
<dbReference type="InterPro" id="IPR002942">
    <property type="entry name" value="S4_RNA-bd"/>
</dbReference>
<dbReference type="InterPro" id="IPR036986">
    <property type="entry name" value="S4_RNA-bd_sf"/>
</dbReference>
<dbReference type="NCBIfam" id="NF003717">
    <property type="entry name" value="PRK05327.1"/>
    <property type="match status" value="1"/>
</dbReference>
<dbReference type="NCBIfam" id="TIGR01017">
    <property type="entry name" value="rpsD_bact"/>
    <property type="match status" value="1"/>
</dbReference>
<dbReference type="PANTHER" id="PTHR11831">
    <property type="entry name" value="30S 40S RIBOSOMAL PROTEIN"/>
    <property type="match status" value="1"/>
</dbReference>
<dbReference type="PANTHER" id="PTHR11831:SF4">
    <property type="entry name" value="SMALL RIBOSOMAL SUBUNIT PROTEIN US4M"/>
    <property type="match status" value="1"/>
</dbReference>
<dbReference type="Pfam" id="PF00163">
    <property type="entry name" value="Ribosomal_S4"/>
    <property type="match status" value="1"/>
</dbReference>
<dbReference type="Pfam" id="PF01479">
    <property type="entry name" value="S4"/>
    <property type="match status" value="1"/>
</dbReference>
<dbReference type="SMART" id="SM01390">
    <property type="entry name" value="Ribosomal_S4"/>
    <property type="match status" value="1"/>
</dbReference>
<dbReference type="SMART" id="SM00363">
    <property type="entry name" value="S4"/>
    <property type="match status" value="1"/>
</dbReference>
<dbReference type="SUPFAM" id="SSF55174">
    <property type="entry name" value="Alpha-L RNA-binding motif"/>
    <property type="match status" value="1"/>
</dbReference>
<dbReference type="PROSITE" id="PS00632">
    <property type="entry name" value="RIBOSOMAL_S4"/>
    <property type="match status" value="1"/>
</dbReference>
<dbReference type="PROSITE" id="PS50889">
    <property type="entry name" value="S4"/>
    <property type="match status" value="1"/>
</dbReference>
<reference key="1">
    <citation type="journal article" date="2008" name="J. Bacteriol.">
        <title>Complete genome sequence of Leuconostoc citreum KM20.</title>
        <authorList>
            <person name="Kim J.F."/>
            <person name="Jeong H."/>
            <person name="Lee J.-S."/>
            <person name="Choi S.-H."/>
            <person name="Ha M."/>
            <person name="Hur C.-G."/>
            <person name="Kim J.-S."/>
            <person name="Lee S."/>
            <person name="Park H.-S."/>
            <person name="Park Y.-H."/>
            <person name="Oh T.K."/>
        </authorList>
    </citation>
    <scope>NUCLEOTIDE SEQUENCE [LARGE SCALE GENOMIC DNA]</scope>
    <source>
        <strain>KM20</strain>
    </source>
</reference>
<name>RS4_LEUCK</name>